<evidence type="ECO:0000255" key="1">
    <source>
        <dbReference type="HAMAP-Rule" id="MF_01315"/>
    </source>
</evidence>
<evidence type="ECO:0000305" key="2"/>
<feature type="chain" id="PRO_0000132188" description="Small ribosomal subunit protein uS13">
    <location>
        <begin position="1"/>
        <end position="148"/>
    </location>
</feature>
<keyword id="KW-0687">Ribonucleoprotein</keyword>
<keyword id="KW-0689">Ribosomal protein</keyword>
<keyword id="KW-0694">RNA-binding</keyword>
<keyword id="KW-0699">rRNA-binding</keyword>
<organism>
    <name type="scientific">Pyrococcus horikoshii (strain ATCC 700860 / DSM 12428 / JCM 9974 / NBRC 100139 / OT-3)</name>
    <dbReference type="NCBI Taxonomy" id="70601"/>
    <lineage>
        <taxon>Archaea</taxon>
        <taxon>Methanobacteriati</taxon>
        <taxon>Methanobacteriota</taxon>
        <taxon>Thermococci</taxon>
        <taxon>Thermococcales</taxon>
        <taxon>Thermococcaceae</taxon>
        <taxon>Pyrococcus</taxon>
    </lineage>
</organism>
<dbReference type="EMBL" id="BA000001">
    <property type="protein sequence ID" value="BAA30753.1"/>
    <property type="molecule type" value="Genomic_DNA"/>
</dbReference>
<dbReference type="PIR" id="A71044">
    <property type="entry name" value="A71044"/>
</dbReference>
<dbReference type="RefSeq" id="WP_010885709.1">
    <property type="nucleotide sequence ID" value="NC_000961.1"/>
</dbReference>
<dbReference type="SMR" id="O74021"/>
<dbReference type="STRING" id="70601.gene:9378633"/>
<dbReference type="EnsemblBacteria" id="BAA30753">
    <property type="protein sequence ID" value="BAA30753"/>
    <property type="gene ID" value="BAA30753"/>
</dbReference>
<dbReference type="GeneID" id="1442490"/>
<dbReference type="KEGG" id="pho:PH1641"/>
<dbReference type="eggNOG" id="arCOG01722">
    <property type="taxonomic scope" value="Archaea"/>
</dbReference>
<dbReference type="OrthoDB" id="372127at2157"/>
<dbReference type="Proteomes" id="UP000000752">
    <property type="component" value="Chromosome"/>
</dbReference>
<dbReference type="GO" id="GO:0005829">
    <property type="term" value="C:cytosol"/>
    <property type="evidence" value="ECO:0007669"/>
    <property type="project" value="TreeGrafter"/>
</dbReference>
<dbReference type="GO" id="GO:0015935">
    <property type="term" value="C:small ribosomal subunit"/>
    <property type="evidence" value="ECO:0007669"/>
    <property type="project" value="TreeGrafter"/>
</dbReference>
<dbReference type="GO" id="GO:0019843">
    <property type="term" value="F:rRNA binding"/>
    <property type="evidence" value="ECO:0007669"/>
    <property type="project" value="UniProtKB-UniRule"/>
</dbReference>
<dbReference type="GO" id="GO:0003735">
    <property type="term" value="F:structural constituent of ribosome"/>
    <property type="evidence" value="ECO:0007669"/>
    <property type="project" value="InterPro"/>
</dbReference>
<dbReference type="GO" id="GO:0006412">
    <property type="term" value="P:translation"/>
    <property type="evidence" value="ECO:0007669"/>
    <property type="project" value="UniProtKB-UniRule"/>
</dbReference>
<dbReference type="FunFam" id="1.10.8.50:FF:000001">
    <property type="entry name" value="30S ribosomal protein S13"/>
    <property type="match status" value="1"/>
</dbReference>
<dbReference type="FunFam" id="4.10.910.10:FF:000002">
    <property type="entry name" value="40S ribosomal protein S18"/>
    <property type="match status" value="1"/>
</dbReference>
<dbReference type="Gene3D" id="1.10.8.50">
    <property type="match status" value="1"/>
</dbReference>
<dbReference type="Gene3D" id="4.10.910.10">
    <property type="entry name" value="30s ribosomal protein s13, domain 2"/>
    <property type="match status" value="1"/>
</dbReference>
<dbReference type="HAMAP" id="MF_01315">
    <property type="entry name" value="Ribosomal_uS13"/>
    <property type="match status" value="1"/>
</dbReference>
<dbReference type="InterPro" id="IPR027437">
    <property type="entry name" value="Rbsml_uS13_C"/>
</dbReference>
<dbReference type="InterPro" id="IPR001892">
    <property type="entry name" value="Ribosomal_uS13"/>
</dbReference>
<dbReference type="InterPro" id="IPR010979">
    <property type="entry name" value="Ribosomal_uS13-like_H2TH"/>
</dbReference>
<dbReference type="InterPro" id="IPR019977">
    <property type="entry name" value="Ribosomal_uS13_archaeal"/>
</dbReference>
<dbReference type="InterPro" id="IPR018269">
    <property type="entry name" value="Ribosomal_uS13_CS"/>
</dbReference>
<dbReference type="NCBIfam" id="NF003140">
    <property type="entry name" value="PRK04053.1"/>
    <property type="match status" value="1"/>
</dbReference>
<dbReference type="NCBIfam" id="TIGR03629">
    <property type="entry name" value="uS13_arch"/>
    <property type="match status" value="1"/>
</dbReference>
<dbReference type="PANTHER" id="PTHR10871">
    <property type="entry name" value="30S RIBOSOMAL PROTEIN S13/40S RIBOSOMAL PROTEIN S18"/>
    <property type="match status" value="1"/>
</dbReference>
<dbReference type="PANTHER" id="PTHR10871:SF3">
    <property type="entry name" value="SMALL RIBOSOMAL SUBUNIT PROTEIN US13"/>
    <property type="match status" value="1"/>
</dbReference>
<dbReference type="Pfam" id="PF00416">
    <property type="entry name" value="Ribosomal_S13"/>
    <property type="match status" value="1"/>
</dbReference>
<dbReference type="PIRSF" id="PIRSF002134">
    <property type="entry name" value="Ribosomal_S13"/>
    <property type="match status" value="1"/>
</dbReference>
<dbReference type="SUPFAM" id="SSF46946">
    <property type="entry name" value="S13-like H2TH domain"/>
    <property type="match status" value="1"/>
</dbReference>
<dbReference type="PROSITE" id="PS00646">
    <property type="entry name" value="RIBOSOMAL_S13_1"/>
    <property type="match status" value="1"/>
</dbReference>
<dbReference type="PROSITE" id="PS50159">
    <property type="entry name" value="RIBOSOMAL_S13_2"/>
    <property type="match status" value="1"/>
</dbReference>
<accession>O74021</accession>
<name>RS13_PYRHO</name>
<sequence length="148" mass="16947">MVDFRHIVRVAGVDLDGNKQLRWALTAIKGVGINFATMVCRVAGLDPFMKAGYLTDEQVKKIEEILQDPVSHGIPRWAVNRPKDYETGKDLHLITAKLDMAIREDIMRLRRIRAYRGIRHELGLPVRGQRTRSNFRRGQTVGVSKKKK</sequence>
<reference key="1">
    <citation type="journal article" date="1998" name="DNA Res.">
        <title>Complete sequence and gene organization of the genome of a hyper-thermophilic archaebacterium, Pyrococcus horikoshii OT3.</title>
        <authorList>
            <person name="Kawarabayasi Y."/>
            <person name="Sawada M."/>
            <person name="Horikawa H."/>
            <person name="Haikawa Y."/>
            <person name="Hino Y."/>
            <person name="Yamamoto S."/>
            <person name="Sekine M."/>
            <person name="Baba S."/>
            <person name="Kosugi H."/>
            <person name="Hosoyama A."/>
            <person name="Nagai Y."/>
            <person name="Sakai M."/>
            <person name="Ogura K."/>
            <person name="Otsuka R."/>
            <person name="Nakazawa H."/>
            <person name="Takamiya M."/>
            <person name="Ohfuku Y."/>
            <person name="Funahashi T."/>
            <person name="Tanaka T."/>
            <person name="Kudoh Y."/>
            <person name="Yamazaki J."/>
            <person name="Kushida N."/>
            <person name="Oguchi A."/>
            <person name="Aoki K."/>
            <person name="Yoshizawa T."/>
            <person name="Nakamura Y."/>
            <person name="Robb F.T."/>
            <person name="Horikoshi K."/>
            <person name="Masuchi Y."/>
            <person name="Shizuya H."/>
            <person name="Kikuchi H."/>
        </authorList>
    </citation>
    <scope>NUCLEOTIDE SEQUENCE [LARGE SCALE GENOMIC DNA]</scope>
    <source>
        <strain>ATCC 700860 / DSM 12428 / JCM 9974 / NBRC 100139 / OT-3</strain>
    </source>
</reference>
<gene>
    <name evidence="1" type="primary">rps13</name>
    <name type="ordered locus">PH1641</name>
</gene>
<proteinExistence type="inferred from homology"/>
<protein>
    <recommendedName>
        <fullName evidence="1">Small ribosomal subunit protein uS13</fullName>
    </recommendedName>
    <alternativeName>
        <fullName evidence="2">30S ribosomal protein S13</fullName>
    </alternativeName>
</protein>
<comment type="function">
    <text evidence="1">Located at the top of the head of the 30S subunit, it contacts several helices of the 16S rRNA. In the 70S ribosome it contacts the 23S rRNA (bridge B1a) and protein L5 of the 50S subunit (bridge B1b), connecting the 2 subunits; these bridges are implicated in subunit movement.</text>
</comment>
<comment type="subunit">
    <text evidence="1">Part of the 30S ribosomal subunit. Forms a loose heterodimer with protein S19. Forms two bridges to the 50S subunit in the 70S ribosome.</text>
</comment>
<comment type="similarity">
    <text evidence="1">Belongs to the universal ribosomal protein uS13 family.</text>
</comment>